<evidence type="ECO:0000255" key="1">
    <source>
        <dbReference type="HAMAP-Rule" id="MF_01334"/>
    </source>
</evidence>
<evidence type="ECO:0000305" key="2"/>
<sequence length="208" mass="22466">MEKHMKVVAFERQQQGTGASRRLRNAGKTTGIVYGGEAAPQMIELDHNALWHALKKEAFHSSILDLEVAGKSQRVLLRDVQYHPFRQLVLHVDFQRIDPKKKLHTKAPLHFLNAETSPAVKLSSAVVSHVVTEIEIECLPADLPEFLEVDLSKIEAGQSLHAKDIALPNGVALTAHVDAENPVIASATIPAGAVSDEAAAGEGETPAA</sequence>
<comment type="function">
    <text evidence="1">This is one of the proteins that binds to the 5S RNA in the ribosome where it forms part of the central protuberance.</text>
</comment>
<comment type="subunit">
    <text evidence="1">Part of the 50S ribosomal subunit; part of the 5S rRNA/L5/L18/L25 subcomplex. Contacts the 5S rRNA. Binds to the 5S rRNA independently of L5 and L18.</text>
</comment>
<comment type="similarity">
    <text evidence="1">Belongs to the bacterial ribosomal protein bL25 family. CTC subfamily.</text>
</comment>
<name>RL25_BURPS</name>
<gene>
    <name evidence="1" type="primary">rplY</name>
    <name evidence="1" type="synonym">ctc</name>
    <name type="ordered locus">BPSL0520</name>
</gene>
<keyword id="KW-1185">Reference proteome</keyword>
<keyword id="KW-0687">Ribonucleoprotein</keyword>
<keyword id="KW-0689">Ribosomal protein</keyword>
<keyword id="KW-0694">RNA-binding</keyword>
<keyword id="KW-0699">rRNA-binding</keyword>
<dbReference type="EMBL" id="BX571965">
    <property type="protein sequence ID" value="CAH34510.1"/>
    <property type="molecule type" value="Genomic_DNA"/>
</dbReference>
<dbReference type="SMR" id="Q63XL9"/>
<dbReference type="STRING" id="272560.BPSL0520"/>
<dbReference type="KEGG" id="bps:BPSL0520"/>
<dbReference type="eggNOG" id="COG1825">
    <property type="taxonomic scope" value="Bacteria"/>
</dbReference>
<dbReference type="Proteomes" id="UP000000605">
    <property type="component" value="Chromosome 1"/>
</dbReference>
<dbReference type="GO" id="GO:0022625">
    <property type="term" value="C:cytosolic large ribosomal subunit"/>
    <property type="evidence" value="ECO:0007669"/>
    <property type="project" value="TreeGrafter"/>
</dbReference>
<dbReference type="GO" id="GO:0008097">
    <property type="term" value="F:5S rRNA binding"/>
    <property type="evidence" value="ECO:0007669"/>
    <property type="project" value="InterPro"/>
</dbReference>
<dbReference type="GO" id="GO:0003735">
    <property type="term" value="F:structural constituent of ribosome"/>
    <property type="evidence" value="ECO:0007669"/>
    <property type="project" value="InterPro"/>
</dbReference>
<dbReference type="GO" id="GO:0006412">
    <property type="term" value="P:translation"/>
    <property type="evidence" value="ECO:0007669"/>
    <property type="project" value="UniProtKB-UniRule"/>
</dbReference>
<dbReference type="CDD" id="cd00495">
    <property type="entry name" value="Ribosomal_L25_TL5_CTC"/>
    <property type="match status" value="1"/>
</dbReference>
<dbReference type="Gene3D" id="2.170.120.20">
    <property type="entry name" value="Ribosomal protein L25, beta domain"/>
    <property type="match status" value="1"/>
</dbReference>
<dbReference type="Gene3D" id="2.40.240.10">
    <property type="entry name" value="Ribosomal Protein L25, Chain P"/>
    <property type="match status" value="1"/>
</dbReference>
<dbReference type="HAMAP" id="MF_01334">
    <property type="entry name" value="Ribosomal_bL25_CTC"/>
    <property type="match status" value="1"/>
</dbReference>
<dbReference type="InterPro" id="IPR020056">
    <property type="entry name" value="Rbsml_bL25/Gln-tRNA_synth_N"/>
</dbReference>
<dbReference type="InterPro" id="IPR011035">
    <property type="entry name" value="Ribosomal_bL25/Gln-tRNA_synth"/>
</dbReference>
<dbReference type="InterPro" id="IPR020057">
    <property type="entry name" value="Ribosomal_bL25_b-dom"/>
</dbReference>
<dbReference type="InterPro" id="IPR037121">
    <property type="entry name" value="Ribosomal_bL25_C"/>
</dbReference>
<dbReference type="InterPro" id="IPR001021">
    <property type="entry name" value="Ribosomal_bL25_long"/>
</dbReference>
<dbReference type="InterPro" id="IPR029751">
    <property type="entry name" value="Ribosomal_L25_dom"/>
</dbReference>
<dbReference type="InterPro" id="IPR020930">
    <property type="entry name" value="Ribosomal_uL5_bac-type"/>
</dbReference>
<dbReference type="NCBIfam" id="TIGR00731">
    <property type="entry name" value="bL25_bact_ctc"/>
    <property type="match status" value="1"/>
</dbReference>
<dbReference type="NCBIfam" id="NF004128">
    <property type="entry name" value="PRK05618.1-2"/>
    <property type="match status" value="1"/>
</dbReference>
<dbReference type="NCBIfam" id="NF004130">
    <property type="entry name" value="PRK05618.1-5"/>
    <property type="match status" value="1"/>
</dbReference>
<dbReference type="NCBIfam" id="NF004612">
    <property type="entry name" value="PRK05943.1"/>
    <property type="match status" value="1"/>
</dbReference>
<dbReference type="PANTHER" id="PTHR33284">
    <property type="entry name" value="RIBOSOMAL PROTEIN L25/GLN-TRNA SYNTHETASE, ANTI-CODON-BINDING DOMAIN-CONTAINING PROTEIN"/>
    <property type="match status" value="1"/>
</dbReference>
<dbReference type="PANTHER" id="PTHR33284:SF1">
    <property type="entry name" value="RIBOSOMAL PROTEIN L25_GLN-TRNA SYNTHETASE, ANTI-CODON-BINDING DOMAIN-CONTAINING PROTEIN"/>
    <property type="match status" value="1"/>
</dbReference>
<dbReference type="Pfam" id="PF01386">
    <property type="entry name" value="Ribosomal_L25p"/>
    <property type="match status" value="1"/>
</dbReference>
<dbReference type="Pfam" id="PF14693">
    <property type="entry name" value="Ribosomal_TL5_C"/>
    <property type="match status" value="1"/>
</dbReference>
<dbReference type="SUPFAM" id="SSF50715">
    <property type="entry name" value="Ribosomal protein L25-like"/>
    <property type="match status" value="1"/>
</dbReference>
<protein>
    <recommendedName>
        <fullName evidence="1">Large ribosomal subunit protein bL25</fullName>
    </recommendedName>
    <alternativeName>
        <fullName evidence="2">50S ribosomal protein L25</fullName>
    </alternativeName>
    <alternativeName>
        <fullName evidence="1">General stress protein CTC</fullName>
    </alternativeName>
</protein>
<organism>
    <name type="scientific">Burkholderia pseudomallei (strain K96243)</name>
    <dbReference type="NCBI Taxonomy" id="272560"/>
    <lineage>
        <taxon>Bacteria</taxon>
        <taxon>Pseudomonadati</taxon>
        <taxon>Pseudomonadota</taxon>
        <taxon>Betaproteobacteria</taxon>
        <taxon>Burkholderiales</taxon>
        <taxon>Burkholderiaceae</taxon>
        <taxon>Burkholderia</taxon>
        <taxon>pseudomallei group</taxon>
    </lineage>
</organism>
<feature type="chain" id="PRO_0000181528" description="Large ribosomal subunit protein bL25">
    <location>
        <begin position="1"/>
        <end position="208"/>
    </location>
</feature>
<accession>Q63XL9</accession>
<reference key="1">
    <citation type="journal article" date="2004" name="Proc. Natl. Acad. Sci. U.S.A.">
        <title>Genomic plasticity of the causative agent of melioidosis, Burkholderia pseudomallei.</title>
        <authorList>
            <person name="Holden M.T.G."/>
            <person name="Titball R.W."/>
            <person name="Peacock S.J."/>
            <person name="Cerdeno-Tarraga A.-M."/>
            <person name="Atkins T."/>
            <person name="Crossman L.C."/>
            <person name="Pitt T."/>
            <person name="Churcher C."/>
            <person name="Mungall K.L."/>
            <person name="Bentley S.D."/>
            <person name="Sebaihia M."/>
            <person name="Thomson N.R."/>
            <person name="Bason N."/>
            <person name="Beacham I.R."/>
            <person name="Brooks K."/>
            <person name="Brown K.A."/>
            <person name="Brown N.F."/>
            <person name="Challis G.L."/>
            <person name="Cherevach I."/>
            <person name="Chillingworth T."/>
            <person name="Cronin A."/>
            <person name="Crossett B."/>
            <person name="Davis P."/>
            <person name="DeShazer D."/>
            <person name="Feltwell T."/>
            <person name="Fraser A."/>
            <person name="Hance Z."/>
            <person name="Hauser H."/>
            <person name="Holroyd S."/>
            <person name="Jagels K."/>
            <person name="Keith K.E."/>
            <person name="Maddison M."/>
            <person name="Moule S."/>
            <person name="Price C."/>
            <person name="Quail M.A."/>
            <person name="Rabbinowitsch E."/>
            <person name="Rutherford K."/>
            <person name="Sanders M."/>
            <person name="Simmonds M."/>
            <person name="Songsivilai S."/>
            <person name="Stevens K."/>
            <person name="Tumapa S."/>
            <person name="Vesaratchavest M."/>
            <person name="Whitehead S."/>
            <person name="Yeats C."/>
            <person name="Barrell B.G."/>
            <person name="Oyston P.C.F."/>
            <person name="Parkhill J."/>
        </authorList>
    </citation>
    <scope>NUCLEOTIDE SEQUENCE [LARGE SCALE GENOMIC DNA]</scope>
    <source>
        <strain>K96243</strain>
    </source>
</reference>
<proteinExistence type="inferred from homology"/>